<feature type="chain" id="PRO_0000272914" description="Large ribosomal subunit protein uL23c">
    <location>
        <begin position="1"/>
        <end position="90"/>
    </location>
</feature>
<gene>
    <name type="primary">rpl23</name>
</gene>
<protein>
    <recommendedName>
        <fullName evidence="2">Large ribosomal subunit protein uL23c</fullName>
    </recommendedName>
    <alternativeName>
        <fullName>50S ribosomal protein L23, chloroplastic</fullName>
    </alternativeName>
</protein>
<keyword id="KW-0150">Chloroplast</keyword>
<keyword id="KW-0934">Plastid</keyword>
<keyword id="KW-0687">Ribonucleoprotein</keyword>
<keyword id="KW-0689">Ribosomal protein</keyword>
<keyword id="KW-0694">RNA-binding</keyword>
<keyword id="KW-0699">rRNA-binding</keyword>
<sequence length="90" mass="10606">MIDLVKYPVITEKSCRLIEKNQYTFDVDLRLTKPQIKELIEGFFDVNVTAVNTHRPPRKKRRMGLRVGYKPRYKRVIVTIKADQSIPIFA</sequence>
<evidence type="ECO:0000250" key="1"/>
<evidence type="ECO:0000305" key="2"/>
<dbReference type="EMBL" id="DQ291132">
    <property type="protein sequence ID" value="ABB81992.1"/>
    <property type="molecule type" value="Genomic_DNA"/>
</dbReference>
<dbReference type="RefSeq" id="YP_635831.1">
    <property type="nucleotide sequence ID" value="NC_008099.1"/>
</dbReference>
<dbReference type="SMR" id="Q20F14"/>
<dbReference type="GeneID" id="4100168"/>
<dbReference type="GO" id="GO:0009507">
    <property type="term" value="C:chloroplast"/>
    <property type="evidence" value="ECO:0007669"/>
    <property type="project" value="UniProtKB-SubCell"/>
</dbReference>
<dbReference type="GO" id="GO:1990904">
    <property type="term" value="C:ribonucleoprotein complex"/>
    <property type="evidence" value="ECO:0007669"/>
    <property type="project" value="UniProtKB-KW"/>
</dbReference>
<dbReference type="GO" id="GO:0005840">
    <property type="term" value="C:ribosome"/>
    <property type="evidence" value="ECO:0007669"/>
    <property type="project" value="UniProtKB-KW"/>
</dbReference>
<dbReference type="GO" id="GO:0019843">
    <property type="term" value="F:rRNA binding"/>
    <property type="evidence" value="ECO:0007669"/>
    <property type="project" value="UniProtKB-UniRule"/>
</dbReference>
<dbReference type="GO" id="GO:0003735">
    <property type="term" value="F:structural constituent of ribosome"/>
    <property type="evidence" value="ECO:0007669"/>
    <property type="project" value="InterPro"/>
</dbReference>
<dbReference type="GO" id="GO:0006412">
    <property type="term" value="P:translation"/>
    <property type="evidence" value="ECO:0007669"/>
    <property type="project" value="UniProtKB-UniRule"/>
</dbReference>
<dbReference type="FunFam" id="3.30.70.330:FF:000001">
    <property type="entry name" value="50S ribosomal protein L23"/>
    <property type="match status" value="1"/>
</dbReference>
<dbReference type="Gene3D" id="3.30.70.330">
    <property type="match status" value="1"/>
</dbReference>
<dbReference type="HAMAP" id="MF_01369_B">
    <property type="entry name" value="Ribosomal_uL23_B"/>
    <property type="match status" value="1"/>
</dbReference>
<dbReference type="InterPro" id="IPR012677">
    <property type="entry name" value="Nucleotide-bd_a/b_plait_sf"/>
</dbReference>
<dbReference type="InterPro" id="IPR013025">
    <property type="entry name" value="Ribosomal_uL23-like"/>
</dbReference>
<dbReference type="InterPro" id="IPR012678">
    <property type="entry name" value="Ribosomal_uL23/eL15/eS24_sf"/>
</dbReference>
<dbReference type="NCBIfam" id="NF004363">
    <property type="entry name" value="PRK05738.2-4"/>
    <property type="match status" value="1"/>
</dbReference>
<dbReference type="PANTHER" id="PTHR11620">
    <property type="entry name" value="60S RIBOSOMAL PROTEIN L23A"/>
    <property type="match status" value="1"/>
</dbReference>
<dbReference type="Pfam" id="PF00276">
    <property type="entry name" value="Ribosomal_L23"/>
    <property type="match status" value="1"/>
</dbReference>
<dbReference type="SUPFAM" id="SSF54189">
    <property type="entry name" value="Ribosomal proteins S24e, L23 and L15e"/>
    <property type="match status" value="1"/>
</dbReference>
<proteinExistence type="inferred from homology"/>
<accession>Q20F14</accession>
<geneLocation type="chloroplast"/>
<organism>
    <name type="scientific">Oltmannsiellopsis viridis</name>
    <name type="common">Marine flagellate</name>
    <name type="synonym">Oltmannsiella viridis</name>
    <dbReference type="NCBI Taxonomy" id="51324"/>
    <lineage>
        <taxon>Eukaryota</taxon>
        <taxon>Viridiplantae</taxon>
        <taxon>Chlorophyta</taxon>
        <taxon>Ulvophyceae</taxon>
        <taxon>Oltmannsiellopsidales</taxon>
        <taxon>Oltmannsiellopsidaceae</taxon>
        <taxon>Oltmannsiellopsis</taxon>
    </lineage>
</organism>
<comment type="function">
    <text evidence="1">Binds to 23S rRNA.</text>
</comment>
<comment type="subunit">
    <text evidence="1">Part of the 50S ribosomal subunit.</text>
</comment>
<comment type="subcellular location">
    <subcellularLocation>
        <location>Plastid</location>
        <location>Chloroplast</location>
    </subcellularLocation>
</comment>
<comment type="similarity">
    <text evidence="2">Belongs to the universal ribosomal protein uL23 family.</text>
</comment>
<name>RK23_OLTVI</name>
<reference key="1">
    <citation type="journal article" date="2006" name="BMC Biol.">
        <title>The complete chloroplast DNA sequence of the green alga Oltmannsiellopsis viridis reveals a distinctive quadripartite architecture in the chloroplast genome of early diverging ulvophytes.</title>
        <authorList>
            <person name="Pombert J.-F."/>
            <person name="Lemieux C."/>
            <person name="Turmel M."/>
        </authorList>
    </citation>
    <scope>NUCLEOTIDE SEQUENCE [LARGE SCALE GENOMIC DNA]</scope>
</reference>